<evidence type="ECO:0000250" key="1"/>
<evidence type="ECO:0000255" key="2">
    <source>
        <dbReference type="HAMAP-Rule" id="MF_00062"/>
    </source>
</evidence>
<proteinExistence type="inferred from homology"/>
<keyword id="KW-0067">ATP-binding</keyword>
<keyword id="KW-0342">GTP-binding</keyword>
<keyword id="KW-0547">Nucleotide-binding</keyword>
<keyword id="KW-0548">Nucleotidyltransferase</keyword>
<keyword id="KW-0808">Transferase</keyword>
<comment type="function">
    <text evidence="2">With CysD forms the ATP sulfurylase (ATPS) that catalyzes the adenylation of sulfate producing adenosine 5'-phosphosulfate (APS) and diphosphate, the first enzymatic step in sulfur assimilation pathway. APS synthesis involves the formation of a high-energy phosphoric-sulfuric acid anhydride bond driven by GTP hydrolysis by CysN coupled to ATP hydrolysis by CysD.</text>
</comment>
<comment type="catalytic activity">
    <reaction evidence="2">
        <text>sulfate + ATP + H(+) = adenosine 5'-phosphosulfate + diphosphate</text>
        <dbReference type="Rhea" id="RHEA:18133"/>
        <dbReference type="ChEBI" id="CHEBI:15378"/>
        <dbReference type="ChEBI" id="CHEBI:16189"/>
        <dbReference type="ChEBI" id="CHEBI:30616"/>
        <dbReference type="ChEBI" id="CHEBI:33019"/>
        <dbReference type="ChEBI" id="CHEBI:58243"/>
        <dbReference type="EC" id="2.7.7.4"/>
    </reaction>
</comment>
<comment type="pathway">
    <text evidence="2">Sulfur metabolism; hydrogen sulfide biosynthesis; sulfite from sulfate: step 1/3.</text>
</comment>
<comment type="subunit">
    <text evidence="2">Heterodimer composed of CysD, the smaller subunit, and CysN.</text>
</comment>
<comment type="similarity">
    <text evidence="2">Belongs to the TRAFAC class translation factor GTPase superfamily. Classic translation factor GTPase family. CysN/NodQ subfamily.</text>
</comment>
<gene>
    <name evidence="2" type="primary">cysN</name>
    <name type="ordered locus">BUAP5A_416</name>
</gene>
<protein>
    <recommendedName>
        <fullName evidence="2">Sulfate adenylyltransferase subunit 1</fullName>
        <ecNumber evidence="2">2.7.7.4</ecNumber>
    </recommendedName>
    <alternativeName>
        <fullName evidence="2">ATP-sulfurylase large subunit</fullName>
    </alternativeName>
    <alternativeName>
        <fullName evidence="2">Sulfate adenylate transferase</fullName>
        <shortName evidence="2">SAT</shortName>
    </alternativeName>
</protein>
<feature type="chain" id="PRO_1000117910" description="Sulfate adenylyltransferase subunit 1">
    <location>
        <begin position="1"/>
        <end position="473"/>
    </location>
</feature>
<feature type="domain" description="tr-type G">
    <location>
        <begin position="19"/>
        <end position="238"/>
    </location>
</feature>
<feature type="region of interest" description="G1" evidence="1">
    <location>
        <begin position="28"/>
        <end position="35"/>
    </location>
</feature>
<feature type="region of interest" description="G2" evidence="1">
    <location>
        <begin position="86"/>
        <end position="90"/>
    </location>
</feature>
<feature type="region of interest" description="G3" evidence="1">
    <location>
        <begin position="107"/>
        <end position="110"/>
    </location>
</feature>
<feature type="region of interest" description="G4" evidence="1">
    <location>
        <begin position="162"/>
        <end position="165"/>
    </location>
</feature>
<feature type="region of interest" description="G5" evidence="1">
    <location>
        <begin position="200"/>
        <end position="202"/>
    </location>
</feature>
<feature type="binding site" evidence="2">
    <location>
        <begin position="28"/>
        <end position="35"/>
    </location>
    <ligand>
        <name>GTP</name>
        <dbReference type="ChEBI" id="CHEBI:37565"/>
    </ligand>
</feature>
<feature type="binding site" evidence="2">
    <location>
        <begin position="107"/>
        <end position="111"/>
    </location>
    <ligand>
        <name>GTP</name>
        <dbReference type="ChEBI" id="CHEBI:37565"/>
    </ligand>
</feature>
<feature type="binding site" evidence="2">
    <location>
        <begin position="162"/>
        <end position="165"/>
    </location>
    <ligand>
        <name>GTP</name>
        <dbReference type="ChEBI" id="CHEBI:37565"/>
    </ligand>
</feature>
<name>CYSN_BUCA5</name>
<organism>
    <name type="scientific">Buchnera aphidicola subsp. Acyrthosiphon pisum (strain 5A)</name>
    <dbReference type="NCBI Taxonomy" id="563178"/>
    <lineage>
        <taxon>Bacteria</taxon>
        <taxon>Pseudomonadati</taxon>
        <taxon>Pseudomonadota</taxon>
        <taxon>Gammaproteobacteria</taxon>
        <taxon>Enterobacterales</taxon>
        <taxon>Erwiniaceae</taxon>
        <taxon>Buchnera</taxon>
    </lineage>
</organism>
<accession>B8D9K1</accession>
<dbReference type="EC" id="2.7.7.4" evidence="2"/>
<dbReference type="EMBL" id="CP001161">
    <property type="protein sequence ID" value="ACL30772.1"/>
    <property type="molecule type" value="Genomic_DNA"/>
</dbReference>
<dbReference type="RefSeq" id="WP_009874376.1">
    <property type="nucleotide sequence ID" value="NC_011833.1"/>
</dbReference>
<dbReference type="SMR" id="B8D9K1"/>
<dbReference type="KEGG" id="bap:BUAP5A_416"/>
<dbReference type="HOGENOM" id="CLU_007265_5_2_6"/>
<dbReference type="OrthoDB" id="9804504at2"/>
<dbReference type="UniPathway" id="UPA00140">
    <property type="reaction ID" value="UER00204"/>
</dbReference>
<dbReference type="Proteomes" id="UP000006904">
    <property type="component" value="Chromosome"/>
</dbReference>
<dbReference type="GO" id="GO:0005524">
    <property type="term" value="F:ATP binding"/>
    <property type="evidence" value="ECO:0007669"/>
    <property type="project" value="UniProtKB-KW"/>
</dbReference>
<dbReference type="GO" id="GO:0005525">
    <property type="term" value="F:GTP binding"/>
    <property type="evidence" value="ECO:0007669"/>
    <property type="project" value="UniProtKB-UniRule"/>
</dbReference>
<dbReference type="GO" id="GO:0003924">
    <property type="term" value="F:GTPase activity"/>
    <property type="evidence" value="ECO:0007669"/>
    <property type="project" value="InterPro"/>
</dbReference>
<dbReference type="GO" id="GO:0004781">
    <property type="term" value="F:sulfate adenylyltransferase (ATP) activity"/>
    <property type="evidence" value="ECO:0007669"/>
    <property type="project" value="UniProtKB-UniRule"/>
</dbReference>
<dbReference type="GO" id="GO:0070814">
    <property type="term" value="P:hydrogen sulfide biosynthetic process"/>
    <property type="evidence" value="ECO:0007669"/>
    <property type="project" value="UniProtKB-UniRule"/>
</dbReference>
<dbReference type="GO" id="GO:0000103">
    <property type="term" value="P:sulfate assimilation"/>
    <property type="evidence" value="ECO:0007669"/>
    <property type="project" value="UniProtKB-UniRule"/>
</dbReference>
<dbReference type="CDD" id="cd04166">
    <property type="entry name" value="CysN_ATPS"/>
    <property type="match status" value="1"/>
</dbReference>
<dbReference type="CDD" id="cd03695">
    <property type="entry name" value="CysN_NodQ_II"/>
    <property type="match status" value="1"/>
</dbReference>
<dbReference type="CDD" id="cd04095">
    <property type="entry name" value="CysN_NoDQ_III"/>
    <property type="match status" value="1"/>
</dbReference>
<dbReference type="FunFam" id="3.40.50.300:FF:000119">
    <property type="entry name" value="Sulfate adenylyltransferase subunit 1"/>
    <property type="match status" value="1"/>
</dbReference>
<dbReference type="Gene3D" id="3.40.50.300">
    <property type="entry name" value="P-loop containing nucleotide triphosphate hydrolases"/>
    <property type="match status" value="1"/>
</dbReference>
<dbReference type="Gene3D" id="2.40.30.10">
    <property type="entry name" value="Translation factors"/>
    <property type="match status" value="2"/>
</dbReference>
<dbReference type="HAMAP" id="MF_00062">
    <property type="entry name" value="Sulf_adenylyltr_sub1"/>
    <property type="match status" value="1"/>
</dbReference>
<dbReference type="InterPro" id="IPR041757">
    <property type="entry name" value="CysN_GTP-bd"/>
</dbReference>
<dbReference type="InterPro" id="IPR044138">
    <property type="entry name" value="CysN_II"/>
</dbReference>
<dbReference type="InterPro" id="IPR044139">
    <property type="entry name" value="CysN_NoDQ_III"/>
</dbReference>
<dbReference type="InterPro" id="IPR031157">
    <property type="entry name" value="G_TR_CS"/>
</dbReference>
<dbReference type="InterPro" id="IPR054696">
    <property type="entry name" value="GTP-eEF1A_C"/>
</dbReference>
<dbReference type="InterPro" id="IPR027417">
    <property type="entry name" value="P-loop_NTPase"/>
</dbReference>
<dbReference type="InterPro" id="IPR005225">
    <property type="entry name" value="Small_GTP-bd"/>
</dbReference>
<dbReference type="InterPro" id="IPR011779">
    <property type="entry name" value="SO4_adenylTrfase_lsu"/>
</dbReference>
<dbReference type="InterPro" id="IPR000795">
    <property type="entry name" value="T_Tr_GTP-bd_dom"/>
</dbReference>
<dbReference type="InterPro" id="IPR050100">
    <property type="entry name" value="TRAFAC_GTPase_members"/>
</dbReference>
<dbReference type="InterPro" id="IPR009000">
    <property type="entry name" value="Transl_B-barrel_sf"/>
</dbReference>
<dbReference type="InterPro" id="IPR009001">
    <property type="entry name" value="Transl_elong_EF1A/Init_IF2_C"/>
</dbReference>
<dbReference type="NCBIfam" id="TIGR02034">
    <property type="entry name" value="CysN"/>
    <property type="match status" value="1"/>
</dbReference>
<dbReference type="NCBIfam" id="NF003478">
    <property type="entry name" value="PRK05124.1"/>
    <property type="match status" value="1"/>
</dbReference>
<dbReference type="NCBIfam" id="TIGR00231">
    <property type="entry name" value="small_GTP"/>
    <property type="match status" value="1"/>
</dbReference>
<dbReference type="PANTHER" id="PTHR23115">
    <property type="entry name" value="TRANSLATION FACTOR"/>
    <property type="match status" value="1"/>
</dbReference>
<dbReference type="Pfam" id="PF22594">
    <property type="entry name" value="GTP-eEF1A_C"/>
    <property type="match status" value="1"/>
</dbReference>
<dbReference type="Pfam" id="PF00009">
    <property type="entry name" value="GTP_EFTU"/>
    <property type="match status" value="1"/>
</dbReference>
<dbReference type="PRINTS" id="PR00315">
    <property type="entry name" value="ELONGATNFCT"/>
</dbReference>
<dbReference type="SUPFAM" id="SSF50465">
    <property type="entry name" value="EF-Tu/eEF-1alpha/eIF2-gamma C-terminal domain"/>
    <property type="match status" value="1"/>
</dbReference>
<dbReference type="SUPFAM" id="SSF52540">
    <property type="entry name" value="P-loop containing nucleoside triphosphate hydrolases"/>
    <property type="match status" value="1"/>
</dbReference>
<dbReference type="SUPFAM" id="SSF50447">
    <property type="entry name" value="Translation proteins"/>
    <property type="match status" value="1"/>
</dbReference>
<dbReference type="PROSITE" id="PS00301">
    <property type="entry name" value="G_TR_1"/>
    <property type="match status" value="1"/>
</dbReference>
<dbReference type="PROSITE" id="PS51722">
    <property type="entry name" value="G_TR_2"/>
    <property type="match status" value="1"/>
</dbReference>
<sequence length="473" mass="54285">MNINMKDNFKKWLDLQQKKTLLKFLTCGSVDDGKSTLIGRLLHDTKQIYDDQLFFLKSDSKRHGTQGNEIDLALVVDGLQSEREQGITIDVAYRYFSTNKRKFIIADTPGHEQYTRNMATGASTCDLSILLVDARKGLSEQTYRHSFISTLLGIKYLIVAINKMDLVNYKQEIFENIKKDFLIFSKKLANDLNIIFIPMSALLGENIVFKTKLMPWYQGVTLLSFLETIKIKNSISSEELRFPVQYINRPNADFRGYSGILLSGRMHVGQTIKILPENINSRVSRIVTFDKELKKAEIGESITVVLKDEIDINRGDFFVNIDSILQPSQEAIIDIVWMTDNILLAGESYNVKLSGKKIRVYIKEILFKLDVNTLKKVKSHSLVLNSIGRVKIYFSKPVIFDNYSENRMTGNMIFIDLLTNITVGAGMIVNSLDKKGKIPSNKQKDFESDFYDLITRHFPHWNIPKILMKKVYK</sequence>
<reference key="1">
    <citation type="journal article" date="2009" name="Science">
        <title>The dynamics and time scale of ongoing genomic erosion in symbiotic bacteria.</title>
        <authorList>
            <person name="Moran N.A."/>
            <person name="McLaughlin H.J."/>
            <person name="Sorek R."/>
        </authorList>
    </citation>
    <scope>NUCLEOTIDE SEQUENCE [LARGE SCALE GENOMIC DNA]</scope>
    <source>
        <strain>5A</strain>
    </source>
</reference>